<proteinExistence type="inferred from homology"/>
<protein>
    <recommendedName>
        <fullName>Thiol:disulfide interchange protein DsbA</fullName>
    </recommendedName>
</protein>
<reference key="1">
    <citation type="journal article" date="2002" name="Proc. Natl. Acad. Sci. U.S.A.">
        <title>Extensive mosaic structure revealed by the complete genome sequence of uropathogenic Escherichia coli.</title>
        <authorList>
            <person name="Welch R.A."/>
            <person name="Burland V."/>
            <person name="Plunkett G. III"/>
            <person name="Redford P."/>
            <person name="Roesch P."/>
            <person name="Rasko D."/>
            <person name="Buckles E.L."/>
            <person name="Liou S.-R."/>
            <person name="Boutin A."/>
            <person name="Hackett J."/>
            <person name="Stroud D."/>
            <person name="Mayhew G.F."/>
            <person name="Rose D.J."/>
            <person name="Zhou S."/>
            <person name="Schwartz D.C."/>
            <person name="Perna N.T."/>
            <person name="Mobley H.L.T."/>
            <person name="Donnenberg M.S."/>
            <person name="Blattner F.R."/>
        </authorList>
    </citation>
    <scope>NUCLEOTIDE SEQUENCE [LARGE SCALE GENOMIC DNA]</scope>
    <source>
        <strain>CFT073 / ATCC 700928 / UPEC</strain>
    </source>
</reference>
<keyword id="KW-1015">Disulfide bond</keyword>
<keyword id="KW-0574">Periplasm</keyword>
<keyword id="KW-0676">Redox-active center</keyword>
<keyword id="KW-1185">Reference proteome</keyword>
<keyword id="KW-0732">Signal</keyword>
<dbReference type="EMBL" id="AE014075">
    <property type="protein sequence ID" value="AAN83235.1"/>
    <property type="molecule type" value="Genomic_DNA"/>
</dbReference>
<dbReference type="RefSeq" id="WP_000725344.1">
    <property type="nucleotide sequence ID" value="NZ_CP051263.1"/>
</dbReference>
<dbReference type="BMRB" id="P0A4L5"/>
<dbReference type="SMR" id="P0A4L5"/>
<dbReference type="STRING" id="199310.c4804"/>
<dbReference type="KEGG" id="ecc:c4804"/>
<dbReference type="eggNOG" id="COG1651">
    <property type="taxonomic scope" value="Bacteria"/>
</dbReference>
<dbReference type="HOGENOM" id="CLU_088255_3_0_6"/>
<dbReference type="BioCyc" id="ECOL199310:C4804-MONOMER"/>
<dbReference type="Proteomes" id="UP000001410">
    <property type="component" value="Chromosome"/>
</dbReference>
<dbReference type="GO" id="GO:0042597">
    <property type="term" value="C:periplasmic space"/>
    <property type="evidence" value="ECO:0007669"/>
    <property type="project" value="UniProtKB-SubCell"/>
</dbReference>
<dbReference type="GO" id="GO:0015036">
    <property type="term" value="F:disulfide oxidoreductase activity"/>
    <property type="evidence" value="ECO:0007669"/>
    <property type="project" value="UniProtKB-ARBA"/>
</dbReference>
<dbReference type="CDD" id="cd03019">
    <property type="entry name" value="DsbA_DsbA"/>
    <property type="match status" value="1"/>
</dbReference>
<dbReference type="Gene3D" id="3.40.30.10">
    <property type="entry name" value="Glutaredoxin"/>
    <property type="match status" value="2"/>
</dbReference>
<dbReference type="InterPro" id="IPR001853">
    <property type="entry name" value="DSBA-like_thioredoxin_dom"/>
</dbReference>
<dbReference type="InterPro" id="IPR023205">
    <property type="entry name" value="DsbA/DsbL"/>
</dbReference>
<dbReference type="InterPro" id="IPR050824">
    <property type="entry name" value="Thiol_disulfide_DsbA"/>
</dbReference>
<dbReference type="InterPro" id="IPR036249">
    <property type="entry name" value="Thioredoxin-like_sf"/>
</dbReference>
<dbReference type="InterPro" id="IPR017937">
    <property type="entry name" value="Thioredoxin_CS"/>
</dbReference>
<dbReference type="InterPro" id="IPR013766">
    <property type="entry name" value="Thioredoxin_domain"/>
</dbReference>
<dbReference type="NCBIfam" id="NF008198">
    <property type="entry name" value="PRK10954.1"/>
    <property type="match status" value="1"/>
</dbReference>
<dbReference type="PANTHER" id="PTHR35891">
    <property type="entry name" value="THIOL:DISULFIDE INTERCHANGE PROTEIN DSBA"/>
    <property type="match status" value="1"/>
</dbReference>
<dbReference type="PANTHER" id="PTHR35891:SF2">
    <property type="entry name" value="THIOL:DISULFIDE INTERCHANGE PROTEIN DSBA"/>
    <property type="match status" value="1"/>
</dbReference>
<dbReference type="Pfam" id="PF01323">
    <property type="entry name" value="DSBA"/>
    <property type="match status" value="1"/>
</dbReference>
<dbReference type="PIRSF" id="PIRSF001488">
    <property type="entry name" value="Tdi_protein"/>
    <property type="match status" value="1"/>
</dbReference>
<dbReference type="SUPFAM" id="SSF52833">
    <property type="entry name" value="Thioredoxin-like"/>
    <property type="match status" value="1"/>
</dbReference>
<dbReference type="PROSITE" id="PS00194">
    <property type="entry name" value="THIOREDOXIN_1"/>
    <property type="match status" value="1"/>
</dbReference>
<dbReference type="PROSITE" id="PS51352">
    <property type="entry name" value="THIOREDOXIN_2"/>
    <property type="match status" value="1"/>
</dbReference>
<sequence>MKKIWLALAGLVLAFSASAAQYEDGKQYTTLEKPVAGAPQVLEFFSFFCPHCYQFEEVLHISDNVKKKLPEGVKMTKYHVNFMGGDLGKELTQAWAVAMALGVEDKVTVPLFEGVQKTQTIRSASDIRDVFINAGIKGEEYDAAWNSFVVKSLVAQQEKAAADVQLRGVPAMFVNGKYQLNPQGMDTSNMDVFVQQYADTVKYLSEKK</sequence>
<organism>
    <name type="scientific">Escherichia coli O6:H1 (strain CFT073 / ATCC 700928 / UPEC)</name>
    <dbReference type="NCBI Taxonomy" id="199310"/>
    <lineage>
        <taxon>Bacteria</taxon>
        <taxon>Pseudomonadati</taxon>
        <taxon>Pseudomonadota</taxon>
        <taxon>Gammaproteobacteria</taxon>
        <taxon>Enterobacterales</taxon>
        <taxon>Enterobacteriaceae</taxon>
        <taxon>Escherichia</taxon>
    </lineage>
</organism>
<name>DSBA_ECOL6</name>
<feature type="signal peptide" evidence="1">
    <location>
        <begin position="1"/>
        <end position="19"/>
    </location>
</feature>
<feature type="chain" id="PRO_0000034254" description="Thiol:disulfide interchange protein DsbA">
    <location>
        <begin position="20"/>
        <end position="208"/>
    </location>
</feature>
<feature type="domain" description="Thioredoxin" evidence="2">
    <location>
        <begin position="20"/>
        <end position="150"/>
    </location>
</feature>
<feature type="disulfide bond" description="Redox-active" evidence="2">
    <location>
        <begin position="49"/>
        <end position="52"/>
    </location>
</feature>
<comment type="function">
    <text evidence="1">Required for disulfide bond formation in some periplasmic proteins such as PhoA or OmpA. Acts by transferring its disulfide bond to other proteins and is reduced in the process. DsbA is reoxidized by DsbB. It is required for pilus biogenesis (By similarity).</text>
</comment>
<comment type="subcellular location">
    <subcellularLocation>
        <location evidence="1">Periplasm</location>
    </subcellularLocation>
</comment>
<comment type="similarity">
    <text evidence="3">Belongs to the thioredoxin family. DsbA subfamily.</text>
</comment>
<accession>P0A4L5</accession>
<accession>P59589</accession>
<evidence type="ECO:0000250" key="1"/>
<evidence type="ECO:0000255" key="2">
    <source>
        <dbReference type="PROSITE-ProRule" id="PRU00691"/>
    </source>
</evidence>
<evidence type="ECO:0000305" key="3"/>
<gene>
    <name type="primary">dsbA</name>
    <name type="ordered locus">c4804</name>
</gene>